<organism>
    <name type="scientific">Staphylococcus aureus (strain ED98)</name>
    <dbReference type="NCBI Taxonomy" id="681288"/>
    <lineage>
        <taxon>Bacteria</taxon>
        <taxon>Bacillati</taxon>
        <taxon>Bacillota</taxon>
        <taxon>Bacilli</taxon>
        <taxon>Bacillales</taxon>
        <taxon>Staphylococcaceae</taxon>
        <taxon>Staphylococcus</taxon>
    </lineage>
</organism>
<keyword id="KW-0046">Antibiotic resistance</keyword>
<keyword id="KW-1003">Cell membrane</keyword>
<keyword id="KW-0472">Membrane</keyword>
<keyword id="KW-0479">Metal-binding</keyword>
<keyword id="KW-0812">Transmembrane</keyword>
<keyword id="KW-1133">Transmembrane helix</keyword>
<keyword id="KW-0862">Zinc</keyword>
<keyword id="KW-0863">Zinc-finger</keyword>
<proteinExistence type="inferred from homology"/>
<sequence length="460" mass="52115">MKSCPKCGQQAQDDVQICTQCGHKFDSRQALYRKSTDEDIQTNNIKMRKMVPWAIGFFILILIIILFFLLRNFNSPEAQTKILVNAIENNDKQKVATLLSTKDNKVDSEEAKVYINYIKDEVGLKQFVSDLKNTVHKLNKSKTSVASYIQTRSGQNILRVSKNGTRYIFFDNMSFTAPTKQPIVKPKEKTKYEFKSGGKKKMVIAEANKVTPIGNFIPGTYRIPAMKSTENGDFAGYLKFDFRQSNSETVDVTEDFEEANITVTLKGDTKLNDSSKKVTINDREMAFSSSKTYGPYPQNKDITISASGKAKGKTFTTQTKTIKASDLKYNTEITLNFDSEDIEDYVEKKEKEENSLKNKLIEFFAGYSLANNAAFNQSDFDFVSSYIKKGSSFYDDVKKRVSKGSLMMISSPQIIDAEKHGDKITATVRLINENGKQVDKEYELEQGSQDRLQLIKTSEK</sequence>
<accession>D0K8E2</accession>
<gene>
    <name type="primary">tcaA</name>
    <name type="ordered locus">SAAV_2421</name>
</gene>
<evidence type="ECO:0000250" key="1"/>
<evidence type="ECO:0000255" key="2"/>
<evidence type="ECO:0000305" key="3"/>
<name>TCAA_STAAD</name>
<reference key="1">
    <citation type="journal article" date="2009" name="Proc. Natl. Acad. Sci. U.S.A.">
        <title>Recent human-to-poultry host jump, adaptation, and pandemic spread of Staphylococcus aureus.</title>
        <authorList>
            <person name="Lowder B.V."/>
            <person name="Guinane C.M."/>
            <person name="Ben Zakour N.L."/>
            <person name="Weinert L.A."/>
            <person name="Conway-Morris A."/>
            <person name="Cartwright R.A."/>
            <person name="Simpson A.J."/>
            <person name="Rambaut A."/>
            <person name="Nubel U."/>
            <person name="Fitzgerald J.R."/>
        </authorList>
    </citation>
    <scope>NUCLEOTIDE SEQUENCE [LARGE SCALE GENOMIC DNA]</scope>
    <source>
        <strain>ED98</strain>
    </source>
</reference>
<dbReference type="EMBL" id="CP001781">
    <property type="protein sequence ID" value="ACY12251.1"/>
    <property type="molecule type" value="Genomic_DNA"/>
</dbReference>
<dbReference type="RefSeq" id="WP_000833809.1">
    <property type="nucleotide sequence ID" value="NC_013450.1"/>
</dbReference>
<dbReference type="SMR" id="D0K8E2"/>
<dbReference type="KEGG" id="sad:SAAV_2421"/>
<dbReference type="HOGENOM" id="CLU_047245_0_0_9"/>
<dbReference type="GO" id="GO:0005886">
    <property type="term" value="C:plasma membrane"/>
    <property type="evidence" value="ECO:0007669"/>
    <property type="project" value="UniProtKB-SubCell"/>
</dbReference>
<dbReference type="GO" id="GO:0008270">
    <property type="term" value="F:zinc ion binding"/>
    <property type="evidence" value="ECO:0007669"/>
    <property type="project" value="UniProtKB-KW"/>
</dbReference>
<dbReference type="GO" id="GO:0046677">
    <property type="term" value="P:response to antibiotic"/>
    <property type="evidence" value="ECO:0007669"/>
    <property type="project" value="UniProtKB-KW"/>
</dbReference>
<dbReference type="InterPro" id="IPR023599">
    <property type="entry name" value="Mem_prot_TcaA"/>
</dbReference>
<dbReference type="InterPro" id="IPR054529">
    <property type="entry name" value="TcaA_2nd"/>
</dbReference>
<dbReference type="InterPro" id="IPR054530">
    <property type="entry name" value="TcaA_4th"/>
</dbReference>
<dbReference type="PANTHER" id="PTHR40038">
    <property type="entry name" value="MEMBRANE-ASSOCIATED PROTEIN TCAA"/>
    <property type="match status" value="1"/>
</dbReference>
<dbReference type="PANTHER" id="PTHR40038:SF1">
    <property type="entry name" value="MEMBRANE-ASSOCIATED PROTEIN TCAA"/>
    <property type="match status" value="1"/>
</dbReference>
<dbReference type="Pfam" id="PF22813">
    <property type="entry name" value="TcaA_2nd"/>
    <property type="match status" value="1"/>
</dbReference>
<dbReference type="Pfam" id="PF22820">
    <property type="entry name" value="TcaA_3rd_4th"/>
    <property type="match status" value="1"/>
</dbReference>
<dbReference type="Pfam" id="PF22819">
    <property type="entry name" value="TcaA_5th"/>
    <property type="match status" value="1"/>
</dbReference>
<dbReference type="PIRSF" id="PIRSF032522">
    <property type="entry name" value="TcaA"/>
    <property type="match status" value="1"/>
</dbReference>
<protein>
    <recommendedName>
        <fullName>Membrane-associated protein TcaA</fullName>
    </recommendedName>
</protein>
<feature type="chain" id="PRO_0000412065" description="Membrane-associated protein TcaA">
    <location>
        <begin position="1"/>
        <end position="460"/>
    </location>
</feature>
<feature type="topological domain" description="Cytoplasmic" evidence="2">
    <location>
        <begin position="1"/>
        <end position="49"/>
    </location>
</feature>
<feature type="transmembrane region" description="Helical" evidence="2">
    <location>
        <begin position="50"/>
        <end position="70"/>
    </location>
</feature>
<feature type="topological domain" description="Extracellular" evidence="2">
    <location>
        <begin position="71"/>
        <end position="460"/>
    </location>
</feature>
<feature type="zinc finger region" description="C4-type" evidence="2">
    <location>
        <begin position="4"/>
        <end position="21"/>
    </location>
</feature>
<comment type="function">
    <text evidence="1">Plays a major role in decreasing resistance to glycopeptide antibiotics.</text>
</comment>
<comment type="subcellular location">
    <subcellularLocation>
        <location evidence="1">Cell membrane</location>
        <topology evidence="1">Single-pass membrane protein</topology>
    </subcellularLocation>
</comment>
<comment type="similarity">
    <text evidence="3">Belongs to the TcaA family.</text>
</comment>